<sequence length="206" mass="22529">MLGRLYLVVTPRPGWSLEATLDRTERALAGGVEVVQLRAKDWEARPTLALGERMLALARRYGVPFFLNDRPDLAALLGADGVHLGQNDLTPEEARRFFAGMVGRSTHAPEQALRALEEGVDYLSVGPVWETPTKPGRPAAGLAYVRWAAENLGEKPWYAIGGIDLGNLDQVLEAGARRIVVVRAILDAPDPERAARALRERLYGVA</sequence>
<protein>
    <recommendedName>
        <fullName evidence="1">Thiamine-phosphate synthase</fullName>
        <shortName evidence="1">TP synthase</shortName>
        <shortName evidence="1">TPS</shortName>
        <ecNumber evidence="1">2.5.1.3</ecNumber>
    </recommendedName>
    <alternativeName>
        <fullName evidence="1">Thiamine-phosphate pyrophosphorylase</fullName>
        <shortName evidence="1">TMP pyrophosphorylase</shortName>
        <shortName evidence="1">TMP-PPase</shortName>
    </alternativeName>
</protein>
<accession>Q5SKG9</accession>
<proteinExistence type="inferred from homology"/>
<gene>
    <name evidence="1" type="primary">thiE</name>
    <name type="ordered locus">TTHA0674</name>
</gene>
<comment type="function">
    <text evidence="1">Condenses 4-methyl-5-(beta-hydroxyethyl)thiazole monophosphate (THZ-P) and 2-methyl-4-amino-5-hydroxymethyl pyrimidine pyrophosphate (HMP-PP) to form thiamine monophosphate (TMP).</text>
</comment>
<comment type="catalytic activity">
    <reaction evidence="1">
        <text>2-[(2R,5Z)-2-carboxy-4-methylthiazol-5(2H)-ylidene]ethyl phosphate + 4-amino-2-methyl-5-(diphosphooxymethyl)pyrimidine + 2 H(+) = thiamine phosphate + CO2 + diphosphate</text>
        <dbReference type="Rhea" id="RHEA:47844"/>
        <dbReference type="ChEBI" id="CHEBI:15378"/>
        <dbReference type="ChEBI" id="CHEBI:16526"/>
        <dbReference type="ChEBI" id="CHEBI:33019"/>
        <dbReference type="ChEBI" id="CHEBI:37575"/>
        <dbReference type="ChEBI" id="CHEBI:57841"/>
        <dbReference type="ChEBI" id="CHEBI:62899"/>
        <dbReference type="EC" id="2.5.1.3"/>
    </reaction>
</comment>
<comment type="catalytic activity">
    <reaction evidence="1">
        <text>2-(2-carboxy-4-methylthiazol-5-yl)ethyl phosphate + 4-amino-2-methyl-5-(diphosphooxymethyl)pyrimidine + 2 H(+) = thiamine phosphate + CO2 + diphosphate</text>
        <dbReference type="Rhea" id="RHEA:47848"/>
        <dbReference type="ChEBI" id="CHEBI:15378"/>
        <dbReference type="ChEBI" id="CHEBI:16526"/>
        <dbReference type="ChEBI" id="CHEBI:33019"/>
        <dbReference type="ChEBI" id="CHEBI:37575"/>
        <dbReference type="ChEBI" id="CHEBI:57841"/>
        <dbReference type="ChEBI" id="CHEBI:62890"/>
        <dbReference type="EC" id="2.5.1.3"/>
    </reaction>
</comment>
<comment type="catalytic activity">
    <reaction evidence="1">
        <text>4-methyl-5-(2-phosphooxyethyl)-thiazole + 4-amino-2-methyl-5-(diphosphooxymethyl)pyrimidine + H(+) = thiamine phosphate + diphosphate</text>
        <dbReference type="Rhea" id="RHEA:22328"/>
        <dbReference type="ChEBI" id="CHEBI:15378"/>
        <dbReference type="ChEBI" id="CHEBI:33019"/>
        <dbReference type="ChEBI" id="CHEBI:37575"/>
        <dbReference type="ChEBI" id="CHEBI:57841"/>
        <dbReference type="ChEBI" id="CHEBI:58296"/>
        <dbReference type="EC" id="2.5.1.3"/>
    </reaction>
</comment>
<comment type="cofactor">
    <cofactor evidence="1">
        <name>Mg(2+)</name>
        <dbReference type="ChEBI" id="CHEBI:18420"/>
    </cofactor>
    <text evidence="1">Binds 1 Mg(2+) ion per subunit.</text>
</comment>
<comment type="pathway">
    <text evidence="1">Cofactor biosynthesis; thiamine diphosphate biosynthesis; thiamine phosphate from 4-amino-2-methyl-5-diphosphomethylpyrimidine and 4-methyl-5-(2-phosphoethyl)-thiazole: step 1/1.</text>
</comment>
<comment type="similarity">
    <text evidence="1">Belongs to the thiamine-phosphate synthase family.</text>
</comment>
<organism>
    <name type="scientific">Thermus thermophilus (strain ATCC 27634 / DSM 579 / HB8)</name>
    <dbReference type="NCBI Taxonomy" id="300852"/>
    <lineage>
        <taxon>Bacteria</taxon>
        <taxon>Thermotogati</taxon>
        <taxon>Deinococcota</taxon>
        <taxon>Deinococci</taxon>
        <taxon>Thermales</taxon>
        <taxon>Thermaceae</taxon>
        <taxon>Thermus</taxon>
    </lineage>
</organism>
<feature type="chain" id="PRO_1000008183" description="Thiamine-phosphate synthase">
    <location>
        <begin position="1"/>
        <end position="206"/>
    </location>
</feature>
<feature type="binding site" evidence="1">
    <location>
        <begin position="36"/>
        <end position="40"/>
    </location>
    <ligand>
        <name>4-amino-2-methyl-5-(diphosphooxymethyl)pyrimidine</name>
        <dbReference type="ChEBI" id="CHEBI:57841"/>
    </ligand>
</feature>
<feature type="binding site" evidence="1">
    <location>
        <position position="68"/>
    </location>
    <ligand>
        <name>4-amino-2-methyl-5-(diphosphooxymethyl)pyrimidine</name>
        <dbReference type="ChEBI" id="CHEBI:57841"/>
    </ligand>
</feature>
<feature type="binding site" evidence="1">
    <location>
        <position position="69"/>
    </location>
    <ligand>
        <name>Mg(2+)</name>
        <dbReference type="ChEBI" id="CHEBI:18420"/>
    </ligand>
</feature>
<feature type="binding site" evidence="1">
    <location>
        <position position="88"/>
    </location>
    <ligand>
        <name>Mg(2+)</name>
        <dbReference type="ChEBI" id="CHEBI:18420"/>
    </ligand>
</feature>
<feature type="binding site" evidence="1">
    <location>
        <position position="105"/>
    </location>
    <ligand>
        <name>4-amino-2-methyl-5-(diphosphooxymethyl)pyrimidine</name>
        <dbReference type="ChEBI" id="CHEBI:57841"/>
    </ligand>
</feature>
<feature type="binding site" evidence="1">
    <location>
        <begin position="131"/>
        <end position="133"/>
    </location>
    <ligand>
        <name>2-[(2R,5Z)-2-carboxy-4-methylthiazol-5(2H)-ylidene]ethyl phosphate</name>
        <dbReference type="ChEBI" id="CHEBI:62899"/>
    </ligand>
</feature>
<feature type="binding site" evidence="1">
    <location>
        <position position="134"/>
    </location>
    <ligand>
        <name>4-amino-2-methyl-5-(diphosphooxymethyl)pyrimidine</name>
        <dbReference type="ChEBI" id="CHEBI:57841"/>
    </ligand>
</feature>
<feature type="binding site" evidence="1">
    <location>
        <position position="162"/>
    </location>
    <ligand>
        <name>2-[(2R,5Z)-2-carboxy-4-methylthiazol-5(2H)-ylidene]ethyl phosphate</name>
        <dbReference type="ChEBI" id="CHEBI:62899"/>
    </ligand>
</feature>
<keyword id="KW-0460">Magnesium</keyword>
<keyword id="KW-0479">Metal-binding</keyword>
<keyword id="KW-1185">Reference proteome</keyword>
<keyword id="KW-0784">Thiamine biosynthesis</keyword>
<keyword id="KW-0808">Transferase</keyword>
<reference key="1">
    <citation type="submission" date="2004-11" db="EMBL/GenBank/DDBJ databases">
        <title>Complete genome sequence of Thermus thermophilus HB8.</title>
        <authorList>
            <person name="Masui R."/>
            <person name="Kurokawa K."/>
            <person name="Nakagawa N."/>
            <person name="Tokunaga F."/>
            <person name="Koyama Y."/>
            <person name="Shibata T."/>
            <person name="Oshima T."/>
            <person name="Yokoyama S."/>
            <person name="Yasunaga T."/>
            <person name="Kuramitsu S."/>
        </authorList>
    </citation>
    <scope>NUCLEOTIDE SEQUENCE [LARGE SCALE GENOMIC DNA]</scope>
    <source>
        <strain>ATCC 27634 / DSM 579 / HB8</strain>
    </source>
</reference>
<name>THIE_THET8</name>
<dbReference type="EC" id="2.5.1.3" evidence="1"/>
<dbReference type="EMBL" id="AP008226">
    <property type="protein sequence ID" value="BAD70497.1"/>
    <property type="molecule type" value="Genomic_DNA"/>
</dbReference>
<dbReference type="RefSeq" id="WP_011172766.1">
    <property type="nucleotide sequence ID" value="NC_006461.1"/>
</dbReference>
<dbReference type="RefSeq" id="YP_143940.1">
    <property type="nucleotide sequence ID" value="NC_006461.1"/>
</dbReference>
<dbReference type="SMR" id="Q5SKG9"/>
<dbReference type="EnsemblBacteria" id="BAD70497">
    <property type="protein sequence ID" value="BAD70497"/>
    <property type="gene ID" value="BAD70497"/>
</dbReference>
<dbReference type="GeneID" id="3169730"/>
<dbReference type="KEGG" id="ttj:TTHA0674"/>
<dbReference type="PATRIC" id="fig|300852.9.peg.668"/>
<dbReference type="eggNOG" id="COG0352">
    <property type="taxonomic scope" value="Bacteria"/>
</dbReference>
<dbReference type="HOGENOM" id="CLU_018272_3_0_0"/>
<dbReference type="PhylomeDB" id="Q5SKG9"/>
<dbReference type="UniPathway" id="UPA00060">
    <property type="reaction ID" value="UER00141"/>
</dbReference>
<dbReference type="Proteomes" id="UP000000532">
    <property type="component" value="Chromosome"/>
</dbReference>
<dbReference type="GO" id="GO:0005737">
    <property type="term" value="C:cytoplasm"/>
    <property type="evidence" value="ECO:0007669"/>
    <property type="project" value="TreeGrafter"/>
</dbReference>
<dbReference type="GO" id="GO:0000287">
    <property type="term" value="F:magnesium ion binding"/>
    <property type="evidence" value="ECO:0007669"/>
    <property type="project" value="UniProtKB-UniRule"/>
</dbReference>
<dbReference type="GO" id="GO:0004789">
    <property type="term" value="F:thiamine-phosphate diphosphorylase activity"/>
    <property type="evidence" value="ECO:0007669"/>
    <property type="project" value="UniProtKB-UniRule"/>
</dbReference>
<dbReference type="GO" id="GO:0009228">
    <property type="term" value="P:thiamine biosynthetic process"/>
    <property type="evidence" value="ECO:0007669"/>
    <property type="project" value="UniProtKB-KW"/>
</dbReference>
<dbReference type="GO" id="GO:0009229">
    <property type="term" value="P:thiamine diphosphate biosynthetic process"/>
    <property type="evidence" value="ECO:0007669"/>
    <property type="project" value="UniProtKB-UniRule"/>
</dbReference>
<dbReference type="CDD" id="cd00564">
    <property type="entry name" value="TMP_TenI"/>
    <property type="match status" value="1"/>
</dbReference>
<dbReference type="Gene3D" id="3.20.20.70">
    <property type="entry name" value="Aldolase class I"/>
    <property type="match status" value="1"/>
</dbReference>
<dbReference type="HAMAP" id="MF_00097">
    <property type="entry name" value="TMP_synthase"/>
    <property type="match status" value="1"/>
</dbReference>
<dbReference type="InterPro" id="IPR013785">
    <property type="entry name" value="Aldolase_TIM"/>
</dbReference>
<dbReference type="InterPro" id="IPR036206">
    <property type="entry name" value="ThiamineP_synth_sf"/>
</dbReference>
<dbReference type="InterPro" id="IPR022998">
    <property type="entry name" value="ThiamineP_synth_TenI"/>
</dbReference>
<dbReference type="InterPro" id="IPR034291">
    <property type="entry name" value="TMP_synthase"/>
</dbReference>
<dbReference type="NCBIfam" id="TIGR00693">
    <property type="entry name" value="thiE"/>
    <property type="match status" value="1"/>
</dbReference>
<dbReference type="PANTHER" id="PTHR20857">
    <property type="entry name" value="THIAMINE-PHOSPHATE PYROPHOSPHORYLASE"/>
    <property type="match status" value="1"/>
</dbReference>
<dbReference type="PANTHER" id="PTHR20857:SF15">
    <property type="entry name" value="THIAMINE-PHOSPHATE SYNTHASE"/>
    <property type="match status" value="1"/>
</dbReference>
<dbReference type="Pfam" id="PF02581">
    <property type="entry name" value="TMP-TENI"/>
    <property type="match status" value="1"/>
</dbReference>
<dbReference type="SUPFAM" id="SSF51391">
    <property type="entry name" value="Thiamin phosphate synthase"/>
    <property type="match status" value="1"/>
</dbReference>
<evidence type="ECO:0000255" key="1">
    <source>
        <dbReference type="HAMAP-Rule" id="MF_00097"/>
    </source>
</evidence>